<evidence type="ECO:0000250" key="1">
    <source>
        <dbReference type="UniProtKB" id="P26769"/>
    </source>
</evidence>
<evidence type="ECO:0000250" key="2">
    <source>
        <dbReference type="UniProtKB" id="P30803"/>
    </source>
</evidence>
<evidence type="ECO:0000255" key="3"/>
<evidence type="ECO:0000255" key="4">
    <source>
        <dbReference type="PROSITE-ProRule" id="PRU00099"/>
    </source>
</evidence>
<evidence type="ECO:0000256" key="5">
    <source>
        <dbReference type="SAM" id="MobiDB-lite"/>
    </source>
</evidence>
<evidence type="ECO:0000269" key="6">
    <source>
    </source>
</evidence>
<evidence type="ECO:0000269" key="7">
    <source>
    </source>
</evidence>
<evidence type="ECO:0000305" key="8"/>
<evidence type="ECO:0000312" key="9">
    <source>
        <dbReference type="EMBL" id="AAC62509.1"/>
    </source>
</evidence>
<evidence type="ECO:0000312" key="10">
    <source>
        <dbReference type="EMBL" id="AAF49089.3"/>
    </source>
</evidence>
<evidence type="ECO:0000312" key="11">
    <source>
        <dbReference type="EMBL" id="AAM50201.1"/>
    </source>
</evidence>
<reference evidence="9" key="1">
    <citation type="journal article" date="1992" name="Cell">
        <title>The Drosophila learning and memory gene rutabaga encodes a Ca2+/Calmodulin-responsive adenylyl cyclase.</title>
        <authorList>
            <person name="Levin L.R."/>
            <person name="Han P.-L."/>
            <person name="Hwang P.M."/>
            <person name="Feinstein P.G."/>
            <person name="Davis R.L."/>
            <person name="Reed R.R."/>
        </authorList>
    </citation>
    <scope>NUCLEOTIDE SEQUENCE [MRNA]</scope>
    <source>
        <strain evidence="9">Canton-S</strain>
    </source>
</reference>
<reference evidence="10" key="2">
    <citation type="journal article" date="2000" name="Science">
        <title>The genome sequence of Drosophila melanogaster.</title>
        <authorList>
            <person name="Adams M.D."/>
            <person name="Celniker S.E."/>
            <person name="Holt R.A."/>
            <person name="Evans C.A."/>
            <person name="Gocayne J.D."/>
            <person name="Amanatides P.G."/>
            <person name="Scherer S.E."/>
            <person name="Li P.W."/>
            <person name="Hoskins R.A."/>
            <person name="Galle R.F."/>
            <person name="George R.A."/>
            <person name="Lewis S.E."/>
            <person name="Richards S."/>
            <person name="Ashburner M."/>
            <person name="Henderson S.N."/>
            <person name="Sutton G.G."/>
            <person name="Wortman J.R."/>
            <person name="Yandell M.D."/>
            <person name="Zhang Q."/>
            <person name="Chen L.X."/>
            <person name="Brandon R.C."/>
            <person name="Rogers Y.-H.C."/>
            <person name="Blazej R.G."/>
            <person name="Champe M."/>
            <person name="Pfeiffer B.D."/>
            <person name="Wan K.H."/>
            <person name="Doyle C."/>
            <person name="Baxter E.G."/>
            <person name="Helt G."/>
            <person name="Nelson C.R."/>
            <person name="Miklos G.L.G."/>
            <person name="Abril J.F."/>
            <person name="Agbayani A."/>
            <person name="An H.-J."/>
            <person name="Andrews-Pfannkoch C."/>
            <person name="Baldwin D."/>
            <person name="Ballew R.M."/>
            <person name="Basu A."/>
            <person name="Baxendale J."/>
            <person name="Bayraktaroglu L."/>
            <person name="Beasley E.M."/>
            <person name="Beeson K.Y."/>
            <person name="Benos P.V."/>
            <person name="Berman B.P."/>
            <person name="Bhandari D."/>
            <person name="Bolshakov S."/>
            <person name="Borkova D."/>
            <person name="Botchan M.R."/>
            <person name="Bouck J."/>
            <person name="Brokstein P."/>
            <person name="Brottier P."/>
            <person name="Burtis K.C."/>
            <person name="Busam D.A."/>
            <person name="Butler H."/>
            <person name="Cadieu E."/>
            <person name="Center A."/>
            <person name="Chandra I."/>
            <person name="Cherry J.M."/>
            <person name="Cawley S."/>
            <person name="Dahlke C."/>
            <person name="Davenport L.B."/>
            <person name="Davies P."/>
            <person name="de Pablos B."/>
            <person name="Delcher A."/>
            <person name="Deng Z."/>
            <person name="Mays A.D."/>
            <person name="Dew I."/>
            <person name="Dietz S.M."/>
            <person name="Dodson K."/>
            <person name="Doup L.E."/>
            <person name="Downes M."/>
            <person name="Dugan-Rocha S."/>
            <person name="Dunkov B.C."/>
            <person name="Dunn P."/>
            <person name="Durbin K.J."/>
            <person name="Evangelista C.C."/>
            <person name="Ferraz C."/>
            <person name="Ferriera S."/>
            <person name="Fleischmann W."/>
            <person name="Fosler C."/>
            <person name="Gabrielian A.E."/>
            <person name="Garg N.S."/>
            <person name="Gelbart W.M."/>
            <person name="Glasser K."/>
            <person name="Glodek A."/>
            <person name="Gong F."/>
            <person name="Gorrell J.H."/>
            <person name="Gu Z."/>
            <person name="Guan P."/>
            <person name="Harris M."/>
            <person name="Harris N.L."/>
            <person name="Harvey D.A."/>
            <person name="Heiman T.J."/>
            <person name="Hernandez J.R."/>
            <person name="Houck J."/>
            <person name="Hostin D."/>
            <person name="Houston K.A."/>
            <person name="Howland T.J."/>
            <person name="Wei M.-H."/>
            <person name="Ibegwam C."/>
            <person name="Jalali M."/>
            <person name="Kalush F."/>
            <person name="Karpen G.H."/>
            <person name="Ke Z."/>
            <person name="Kennison J.A."/>
            <person name="Ketchum K.A."/>
            <person name="Kimmel B.E."/>
            <person name="Kodira C.D."/>
            <person name="Kraft C.L."/>
            <person name="Kravitz S."/>
            <person name="Kulp D."/>
            <person name="Lai Z."/>
            <person name="Lasko P."/>
            <person name="Lei Y."/>
            <person name="Levitsky A.A."/>
            <person name="Li J.H."/>
            <person name="Li Z."/>
            <person name="Liang Y."/>
            <person name="Lin X."/>
            <person name="Liu X."/>
            <person name="Mattei B."/>
            <person name="McIntosh T.C."/>
            <person name="McLeod M.P."/>
            <person name="McPherson D."/>
            <person name="Merkulov G."/>
            <person name="Milshina N.V."/>
            <person name="Mobarry C."/>
            <person name="Morris J."/>
            <person name="Moshrefi A."/>
            <person name="Mount S.M."/>
            <person name="Moy M."/>
            <person name="Murphy B."/>
            <person name="Murphy L."/>
            <person name="Muzny D.M."/>
            <person name="Nelson D.L."/>
            <person name="Nelson D.R."/>
            <person name="Nelson K.A."/>
            <person name="Nixon K."/>
            <person name="Nusskern D.R."/>
            <person name="Pacleb J.M."/>
            <person name="Palazzolo M."/>
            <person name="Pittman G.S."/>
            <person name="Pan S."/>
            <person name="Pollard J."/>
            <person name="Puri V."/>
            <person name="Reese M.G."/>
            <person name="Reinert K."/>
            <person name="Remington K."/>
            <person name="Saunders R.D.C."/>
            <person name="Scheeler F."/>
            <person name="Shen H."/>
            <person name="Shue B.C."/>
            <person name="Siden-Kiamos I."/>
            <person name="Simpson M."/>
            <person name="Skupski M.P."/>
            <person name="Smith T.J."/>
            <person name="Spier E."/>
            <person name="Spradling A.C."/>
            <person name="Stapleton M."/>
            <person name="Strong R."/>
            <person name="Sun E."/>
            <person name="Svirskas R."/>
            <person name="Tector C."/>
            <person name="Turner R."/>
            <person name="Venter E."/>
            <person name="Wang A.H."/>
            <person name="Wang X."/>
            <person name="Wang Z.-Y."/>
            <person name="Wassarman D.A."/>
            <person name="Weinstock G.M."/>
            <person name="Weissenbach J."/>
            <person name="Williams S.M."/>
            <person name="Woodage T."/>
            <person name="Worley K.C."/>
            <person name="Wu D."/>
            <person name="Yang S."/>
            <person name="Yao Q.A."/>
            <person name="Ye J."/>
            <person name="Yeh R.-F."/>
            <person name="Zaveri J.S."/>
            <person name="Zhan M."/>
            <person name="Zhang G."/>
            <person name="Zhao Q."/>
            <person name="Zheng L."/>
            <person name="Zheng X.H."/>
            <person name="Zhong F.N."/>
            <person name="Zhong W."/>
            <person name="Zhou X."/>
            <person name="Zhu S.C."/>
            <person name="Zhu X."/>
            <person name="Smith H.O."/>
            <person name="Gibbs R.A."/>
            <person name="Myers E.W."/>
            <person name="Rubin G.M."/>
            <person name="Venter J.C."/>
        </authorList>
    </citation>
    <scope>NUCLEOTIDE SEQUENCE [LARGE SCALE GENOMIC DNA]</scope>
    <source>
        <strain evidence="6">Berkeley</strain>
    </source>
</reference>
<reference evidence="8 10" key="3">
    <citation type="journal article" date="2002" name="Genome Biol.">
        <title>Annotation of the Drosophila melanogaster euchromatic genome: a systematic review.</title>
        <authorList>
            <person name="Misra S."/>
            <person name="Crosby M.A."/>
            <person name="Mungall C.J."/>
            <person name="Matthews B.B."/>
            <person name="Campbell K.S."/>
            <person name="Hradecky P."/>
            <person name="Huang Y."/>
            <person name="Kaminker J.S."/>
            <person name="Millburn G.H."/>
            <person name="Prochnik S.E."/>
            <person name="Smith C.D."/>
            <person name="Tupy J.L."/>
            <person name="Whitfield E.J."/>
            <person name="Bayraktaroglu L."/>
            <person name="Berman B.P."/>
            <person name="Bettencourt B.R."/>
            <person name="Celniker S.E."/>
            <person name="de Grey A.D.N.J."/>
            <person name="Drysdale R.A."/>
            <person name="Harris N.L."/>
            <person name="Richter J."/>
            <person name="Russo S."/>
            <person name="Schroeder A.J."/>
            <person name="Shu S.Q."/>
            <person name="Stapleton M."/>
            <person name="Yamada C."/>
            <person name="Ashburner M."/>
            <person name="Gelbart W.M."/>
            <person name="Rubin G.M."/>
            <person name="Lewis S.E."/>
        </authorList>
    </citation>
    <scope>GENOME REANNOTATION</scope>
    <source>
        <strain>Berkeley</strain>
    </source>
</reference>
<reference evidence="8 11" key="4">
    <citation type="journal article" date="2002" name="Genome Biol.">
        <title>A Drosophila full-length cDNA resource.</title>
        <authorList>
            <person name="Stapleton M."/>
            <person name="Carlson J.W."/>
            <person name="Brokstein P."/>
            <person name="Yu C."/>
            <person name="Champe M."/>
            <person name="George R.A."/>
            <person name="Guarin H."/>
            <person name="Kronmiller B."/>
            <person name="Pacleb J.M."/>
            <person name="Park S."/>
            <person name="Wan K.H."/>
            <person name="Rubin G.M."/>
            <person name="Celniker S.E."/>
        </authorList>
    </citation>
    <scope>NUCLEOTIDE SEQUENCE [LARGE SCALE MRNA] OF 434-1307</scope>
    <source>
        <strain evidence="11">Berkeley</strain>
        <tissue evidence="7">Head</tissue>
    </source>
</reference>
<name>ADCY2_DROME</name>
<gene>
    <name evidence="10" type="primary">Ac76E</name>
    <name type="ORF">CG7978</name>
</gene>
<organism>
    <name type="scientific">Drosophila melanogaster</name>
    <name type="common">Fruit fly</name>
    <dbReference type="NCBI Taxonomy" id="7227"/>
    <lineage>
        <taxon>Eukaryota</taxon>
        <taxon>Metazoa</taxon>
        <taxon>Ecdysozoa</taxon>
        <taxon>Arthropoda</taxon>
        <taxon>Hexapoda</taxon>
        <taxon>Insecta</taxon>
        <taxon>Pterygota</taxon>
        <taxon>Neoptera</taxon>
        <taxon>Endopterygota</taxon>
        <taxon>Diptera</taxon>
        <taxon>Brachycera</taxon>
        <taxon>Muscomorpha</taxon>
        <taxon>Ephydroidea</taxon>
        <taxon>Drosophilidae</taxon>
        <taxon>Drosophila</taxon>
        <taxon>Sophophora</taxon>
    </lineage>
</organism>
<proteinExistence type="evidence at transcript level"/>
<dbReference type="EC" id="4.6.1.1" evidence="1"/>
<dbReference type="EMBL" id="AF093454">
    <property type="protein sequence ID" value="AAC62509.1"/>
    <property type="molecule type" value="mRNA"/>
</dbReference>
<dbReference type="EMBL" id="AE014296">
    <property type="protein sequence ID" value="AAF49089.3"/>
    <property type="molecule type" value="Genomic_DNA"/>
</dbReference>
<dbReference type="EMBL" id="AY119547">
    <property type="protein sequence ID" value="AAM50201.1"/>
    <property type="status" value="ALT_INIT"/>
    <property type="molecule type" value="mRNA"/>
</dbReference>
<dbReference type="PIR" id="B42088">
    <property type="entry name" value="B42088"/>
</dbReference>
<dbReference type="PIR" id="T13158">
    <property type="entry name" value="T13158"/>
</dbReference>
<dbReference type="RefSeq" id="NP_524173.2">
    <property type="nucleotide sequence ID" value="NM_079449.4"/>
</dbReference>
<dbReference type="SMR" id="Q9VW60"/>
<dbReference type="FunCoup" id="Q9VW60">
    <property type="interactions" value="113"/>
</dbReference>
<dbReference type="IntAct" id="Q9VW60">
    <property type="interactions" value="1"/>
</dbReference>
<dbReference type="STRING" id="7227.FBpp0293288"/>
<dbReference type="GlyCosmos" id="Q9VW60">
    <property type="glycosylation" value="4 sites, No reported glycans"/>
</dbReference>
<dbReference type="GlyGen" id="Q9VW60">
    <property type="glycosylation" value="5 sites"/>
</dbReference>
<dbReference type="PaxDb" id="7227-FBpp0293288"/>
<dbReference type="EnsemblMetazoa" id="FBtr0074897">
    <property type="protein sequence ID" value="FBpp0074666"/>
    <property type="gene ID" value="FBgn0004852"/>
</dbReference>
<dbReference type="GeneID" id="40180"/>
<dbReference type="KEGG" id="dme:Dmel_CG7978"/>
<dbReference type="AGR" id="FB:FBgn0004852"/>
<dbReference type="CTD" id="40180"/>
<dbReference type="FlyBase" id="FBgn0004852">
    <property type="gene designation" value="Ac76E"/>
</dbReference>
<dbReference type="VEuPathDB" id="VectorBase:FBgn0004852"/>
<dbReference type="eggNOG" id="KOG3619">
    <property type="taxonomic scope" value="Eukaryota"/>
</dbReference>
<dbReference type="GeneTree" id="ENSGT00940000172626"/>
<dbReference type="HOGENOM" id="CLU_001072_3_1_1"/>
<dbReference type="InParanoid" id="Q9VW60"/>
<dbReference type="OrthoDB" id="10261550at2759"/>
<dbReference type="PhylomeDB" id="Q9VW60"/>
<dbReference type="Reactome" id="R-DME-163615">
    <property type="pathway name" value="PKA activation"/>
</dbReference>
<dbReference type="Reactome" id="R-DME-170660">
    <property type="pathway name" value="Adenylate cyclase activating pathway"/>
</dbReference>
<dbReference type="Reactome" id="R-DME-170670">
    <property type="pathway name" value="Adenylate cyclase inhibitory pathway"/>
</dbReference>
<dbReference type="Reactome" id="R-DME-5610787">
    <property type="pathway name" value="Hedgehog 'off' state"/>
</dbReference>
<dbReference type="BioGRID-ORCS" id="40180">
    <property type="hits" value="0 hits in 3 CRISPR screens"/>
</dbReference>
<dbReference type="GenomeRNAi" id="40180"/>
<dbReference type="PRO" id="PR:Q9VW60"/>
<dbReference type="Proteomes" id="UP000000803">
    <property type="component" value="Chromosome 3L"/>
</dbReference>
<dbReference type="Bgee" id="FBgn0004852">
    <property type="expression patterns" value="Expressed in cortex associated CNS glial cell (Drosophila) in post-embryonic organism and 172 other cell types or tissues"/>
</dbReference>
<dbReference type="ExpressionAtlas" id="Q9VW60">
    <property type="expression patterns" value="baseline and differential"/>
</dbReference>
<dbReference type="GO" id="GO:0005886">
    <property type="term" value="C:plasma membrane"/>
    <property type="evidence" value="ECO:0000318"/>
    <property type="project" value="GO_Central"/>
</dbReference>
<dbReference type="GO" id="GO:0004016">
    <property type="term" value="F:adenylate cyclase activity"/>
    <property type="evidence" value="ECO:0000314"/>
    <property type="project" value="FlyBase"/>
</dbReference>
<dbReference type="GO" id="GO:0005524">
    <property type="term" value="F:ATP binding"/>
    <property type="evidence" value="ECO:0007669"/>
    <property type="project" value="UniProtKB-KW"/>
</dbReference>
<dbReference type="GO" id="GO:0046872">
    <property type="term" value="F:metal ion binding"/>
    <property type="evidence" value="ECO:0007669"/>
    <property type="project" value="UniProtKB-KW"/>
</dbReference>
<dbReference type="GO" id="GO:0007189">
    <property type="term" value="P:adenylate cyclase-activating G protein-coupled receptor signaling pathway"/>
    <property type="evidence" value="ECO:0000318"/>
    <property type="project" value="GO_Central"/>
</dbReference>
<dbReference type="GO" id="GO:0006171">
    <property type="term" value="P:cAMP biosynthetic process"/>
    <property type="evidence" value="ECO:0000318"/>
    <property type="project" value="GO_Central"/>
</dbReference>
<dbReference type="GO" id="GO:0002165">
    <property type="term" value="P:instar larval or pupal development"/>
    <property type="evidence" value="ECO:0000315"/>
    <property type="project" value="FlyBase"/>
</dbReference>
<dbReference type="GO" id="GO:0035556">
    <property type="term" value="P:intracellular signal transduction"/>
    <property type="evidence" value="ECO:0007669"/>
    <property type="project" value="InterPro"/>
</dbReference>
<dbReference type="GO" id="GO:0040015">
    <property type="term" value="P:negative regulation of multicellular organism growth"/>
    <property type="evidence" value="ECO:0000315"/>
    <property type="project" value="FlyBase"/>
</dbReference>
<dbReference type="GO" id="GO:0042594">
    <property type="term" value="P:response to starvation"/>
    <property type="evidence" value="ECO:0000314"/>
    <property type="project" value="FlyBase"/>
</dbReference>
<dbReference type="CDD" id="cd07302">
    <property type="entry name" value="CHD"/>
    <property type="match status" value="2"/>
</dbReference>
<dbReference type="FunFam" id="3.30.70.1230:FF:000003">
    <property type="entry name" value="Adenylate cyclase"/>
    <property type="match status" value="1"/>
</dbReference>
<dbReference type="FunFam" id="3.30.70.1230:FF:000029">
    <property type="entry name" value="Adenylate cyclase type 2"/>
    <property type="match status" value="1"/>
</dbReference>
<dbReference type="Gene3D" id="3.30.70.1230">
    <property type="entry name" value="Nucleotide cyclase"/>
    <property type="match status" value="2"/>
</dbReference>
<dbReference type="InterPro" id="IPR001054">
    <property type="entry name" value="A/G_cyclase"/>
</dbReference>
<dbReference type="InterPro" id="IPR018297">
    <property type="entry name" value="A/G_cyclase_CS"/>
</dbReference>
<dbReference type="InterPro" id="IPR032628">
    <property type="entry name" value="AC_N"/>
</dbReference>
<dbReference type="InterPro" id="IPR030672">
    <property type="entry name" value="Adcy"/>
</dbReference>
<dbReference type="InterPro" id="IPR029787">
    <property type="entry name" value="Nucleotide_cyclase"/>
</dbReference>
<dbReference type="PANTHER" id="PTHR45627">
    <property type="entry name" value="ADENYLATE CYCLASE TYPE 1"/>
    <property type="match status" value="1"/>
</dbReference>
<dbReference type="PANTHER" id="PTHR45627:SF12">
    <property type="entry name" value="ADENYLATE CYCLASE TYPE 2"/>
    <property type="match status" value="1"/>
</dbReference>
<dbReference type="Pfam" id="PF16214">
    <property type="entry name" value="AC_N"/>
    <property type="match status" value="1"/>
</dbReference>
<dbReference type="Pfam" id="PF00211">
    <property type="entry name" value="Guanylate_cyc"/>
    <property type="match status" value="2"/>
</dbReference>
<dbReference type="PIRSF" id="PIRSF039050">
    <property type="entry name" value="Ade_cyc"/>
    <property type="match status" value="1"/>
</dbReference>
<dbReference type="SMART" id="SM00044">
    <property type="entry name" value="CYCc"/>
    <property type="match status" value="2"/>
</dbReference>
<dbReference type="SUPFAM" id="SSF55073">
    <property type="entry name" value="Nucleotide cyclase"/>
    <property type="match status" value="2"/>
</dbReference>
<dbReference type="PROSITE" id="PS00452">
    <property type="entry name" value="GUANYLATE_CYCLASE_1"/>
    <property type="match status" value="2"/>
</dbReference>
<dbReference type="PROSITE" id="PS50125">
    <property type="entry name" value="GUANYLATE_CYCLASE_2"/>
    <property type="match status" value="2"/>
</dbReference>
<protein>
    <recommendedName>
        <fullName>Adenylate cyclase type 2</fullName>
        <ecNumber evidence="1">4.6.1.1</ecNumber>
    </recommendedName>
    <alternativeName>
        <fullName>ATP pyrophosphate-lyase 2</fullName>
    </alternativeName>
    <alternativeName>
        <fullName>Adenylyl cyclase 76E</fullName>
    </alternativeName>
</protein>
<sequence length="1307" mass="142817">MVNHNAETAKTGNGTNATANLIVKADGNATQPKAMTSSAARMNDALSASLADLSEQENGTTAEDIHLNDLYTRYRQRLRKSLFRSGLLTSLLACVVSIIIGIVYGQHLVQTMLLVLAALISGSILTALQFPAVLSSPAAALAFAIVTTFSLGTIAAITGDELAPLPMYALFLCIHSMLPISWPVSVVLALFMTAIHIVYRIGTSPDYAPNLPMLFGEIVMLASASVSGLYYRIMSDAAHNRTVDGTRTGIEQRVKLECEREQQEQLLLSVIPAYIAAEVKRSIMLKMADACQRAGGQASTSATRFHELHVQRHTNVTILFADIVNFTPLSSSLTASDLVKTLNDLFGRFDQIAQENQCLRIKILGDCYYCVSGLPISRPQHATNCVNMGLQMIDAIRHVREATGINVDMRIGIHTGNVLCGVLGLRKWQFDVWSDDVTLANHMESGGVAGRVHITKQTLDFLGDKFEVEQGEGGNRDAYLADHKVESYLIVPPKPAYTYSVPRVVECIEQNDPSPTTEETKEIKETDQSHEATDVADVLLPVTVAPPPAIVDEKMSPTSINSQEAPLHAPLASAASMSIKELSEEEDEADEATAVTEPLMHRDQDGKNDKEPKANGGHRGSGDSAASESVAKSAALSLPADDLLSMSGSESGISNSGAQAQSSNPASVTPTAAAPAGGAASNSLTVAEAPERSRRKLSVQGLMSFADRRRSSGAFIEGRKLSIHSGESFRSHAGHVTRNRPSSKMTKYVECWGADRPFANIAESKLVKNIGLASIAMIESNLLPPERKCFNFNFFGPPTELKPFTMWYRNTPREAMYRAQPDTHFRFDLICAFVLFLSLAVVQLIVIELNLALLGSLLASFVSLALFLYLSNMSVPDVHASTTERNGPGQVVASSRYLRLAMFVVVNILISSCAVFSVINYTVPDGVSKEPSSNQTILESNFSSVFVNSTLEDVQLWEIDYAIPIAPVFLYCCAISLAAISAFLRSGFILKLIAMLVAVIAQVTVLGYSDLFEMYNDANITHGLPLEIKGFLLLLVIILVLHTLDRQGEYVARTDFLWKAKLKVEQEEVETMRGINKILLENILPAHVATHFLHLERSTELYHESYSCVAVMFASIPNYKEFYDETDVNKQGLECLRLLNEIICDFDKLLLKPKFSGIEKIKTIASTYMCASGLRPGKEDGATDEKRTEEHNVVILVEFAIALMSILDSINRESFQRFRLRIGLNHGPVIAGVIGAQKPQYDIWSNTVNVASRMDSCGVMGRLQTTENTAKILMTAGYECECRGLTYVKGKGNLVTYFVKTPFDGKL</sequence>
<keyword id="KW-0067">ATP-binding</keyword>
<keyword id="KW-0115">cAMP biosynthesis</keyword>
<keyword id="KW-1003">Cell membrane</keyword>
<keyword id="KW-0325">Glycoprotein</keyword>
<keyword id="KW-0456">Lyase</keyword>
<keyword id="KW-0460">Magnesium</keyword>
<keyword id="KW-0464">Manganese</keyword>
<keyword id="KW-0472">Membrane</keyword>
<keyword id="KW-0479">Metal-binding</keyword>
<keyword id="KW-0547">Nucleotide-binding</keyword>
<keyword id="KW-0597">Phosphoprotein</keyword>
<keyword id="KW-1185">Reference proteome</keyword>
<keyword id="KW-0677">Repeat</keyword>
<keyword id="KW-0812">Transmembrane</keyword>
<keyword id="KW-1133">Transmembrane helix</keyword>
<comment type="function">
    <text evidence="1">Catalyzes the formation of the signaling molecule cAMP in response to G-protein signaling.</text>
</comment>
<comment type="catalytic activity">
    <reaction evidence="1">
        <text>ATP = 3',5'-cyclic AMP + diphosphate</text>
        <dbReference type="Rhea" id="RHEA:15389"/>
        <dbReference type="ChEBI" id="CHEBI:30616"/>
        <dbReference type="ChEBI" id="CHEBI:33019"/>
        <dbReference type="ChEBI" id="CHEBI:58165"/>
        <dbReference type="EC" id="4.6.1.1"/>
    </reaction>
</comment>
<comment type="cofactor">
    <cofactor evidence="1">
        <name>Mg(2+)</name>
        <dbReference type="ChEBI" id="CHEBI:18420"/>
    </cofactor>
    <cofactor evidence="1">
        <name>Mn(2+)</name>
        <dbReference type="ChEBI" id="CHEBI:29035"/>
    </cofactor>
    <text evidence="1">Binds 2 magnesium ions per subunit. Is also active with manganese (in vitro).</text>
</comment>
<comment type="subcellular location">
    <subcellularLocation>
        <location evidence="1">Membrane</location>
        <topology evidence="1">Multi-pass membrane protein</topology>
    </subcellularLocation>
    <subcellularLocation>
        <location evidence="1">Cell membrane</location>
        <topology evidence="1">Multi-pass membrane protein</topology>
    </subcellularLocation>
</comment>
<comment type="domain">
    <text evidence="1">The protein contains two modules with six transmembrane helices each; both are required for catalytic activity. Isolated N-terminal or C-terminal guanylate cyclase domains have no catalytic activity, but when they are brought together, enzyme activity is restored. The active site is at the interface of the two domains. Both contribute substrate-binding residues, but the catalytic metal ions are bound exclusively via the N-terminal guanylate cyclase domain.</text>
</comment>
<comment type="similarity">
    <text evidence="1 4">Belongs to the adenylyl cyclase class-4/guanylyl cyclase family.</text>
</comment>
<comment type="sequence caution" evidence="8">
    <conflict type="erroneous initiation">
        <sequence resource="EMBL-CDS" id="AAM50201"/>
    </conflict>
</comment>
<feature type="chain" id="PRO_0000195713" description="Adenylate cyclase type 2">
    <location>
        <begin position="1"/>
        <end position="1307"/>
    </location>
</feature>
<feature type="transmembrane region" description="Helical" evidence="3">
    <location>
        <begin position="85"/>
        <end position="105"/>
    </location>
</feature>
<feature type="transmembrane region" description="Helical" evidence="3">
    <location>
        <begin position="113"/>
        <end position="133"/>
    </location>
</feature>
<feature type="transmembrane region" description="Helical" evidence="3">
    <location>
        <begin position="137"/>
        <end position="157"/>
    </location>
</feature>
<feature type="transmembrane region" description="Helical" evidence="3">
    <location>
        <begin position="178"/>
        <end position="198"/>
    </location>
</feature>
<feature type="transmembrane region" description="Helical" evidence="3">
    <location>
        <begin position="211"/>
        <end position="231"/>
    </location>
</feature>
<feature type="topological domain" description="Cytoplasmic" evidence="3">
    <location>
        <begin position="232"/>
        <end position="828"/>
    </location>
</feature>
<feature type="transmembrane region" description="Helical" evidence="3">
    <location>
        <begin position="829"/>
        <end position="849"/>
    </location>
</feature>
<feature type="transmembrane region" description="Helical" evidence="3">
    <location>
        <begin position="851"/>
        <end position="871"/>
    </location>
</feature>
<feature type="transmembrane region" description="Helical" evidence="3">
    <location>
        <begin position="900"/>
        <end position="920"/>
    </location>
</feature>
<feature type="transmembrane region" description="Helical" evidence="3">
    <location>
        <begin position="963"/>
        <end position="983"/>
    </location>
</feature>
<feature type="transmembrane region" description="Helical" evidence="3">
    <location>
        <begin position="987"/>
        <end position="1007"/>
    </location>
</feature>
<feature type="transmembrane region" description="Helical" evidence="3">
    <location>
        <begin position="1024"/>
        <end position="1044"/>
    </location>
</feature>
<feature type="topological domain" description="Cytoplasmic" evidence="3">
    <location>
        <begin position="1045"/>
        <end position="1307"/>
    </location>
</feature>
<feature type="domain" description="Guanylate cyclase 1" evidence="4">
    <location>
        <begin position="317"/>
        <end position="444"/>
    </location>
</feature>
<feature type="domain" description="Guanylate cyclase 2" evidence="4">
    <location>
        <begin position="1110"/>
        <end position="1255"/>
    </location>
</feature>
<feature type="region of interest" description="Disordered" evidence="5">
    <location>
        <begin position="510"/>
        <end position="540"/>
    </location>
</feature>
<feature type="region of interest" description="Disordered" evidence="5">
    <location>
        <begin position="579"/>
        <end position="633"/>
    </location>
</feature>
<feature type="region of interest" description="Disordered" evidence="5">
    <location>
        <begin position="647"/>
        <end position="693"/>
    </location>
</feature>
<feature type="compositionally biased region" description="Basic and acidic residues" evidence="5">
    <location>
        <begin position="518"/>
        <end position="533"/>
    </location>
</feature>
<feature type="compositionally biased region" description="Basic and acidic residues" evidence="5">
    <location>
        <begin position="599"/>
        <end position="613"/>
    </location>
</feature>
<feature type="compositionally biased region" description="Low complexity" evidence="5">
    <location>
        <begin position="624"/>
        <end position="633"/>
    </location>
</feature>
<feature type="compositionally biased region" description="Low complexity" evidence="5">
    <location>
        <begin position="647"/>
        <end position="683"/>
    </location>
</feature>
<feature type="binding site" evidence="2">
    <location>
        <begin position="322"/>
        <end position="327"/>
    </location>
    <ligand>
        <name>ATP</name>
        <dbReference type="ChEBI" id="CHEBI:30616"/>
    </ligand>
</feature>
<feature type="binding site" evidence="2 4">
    <location>
        <position position="322"/>
    </location>
    <ligand>
        <name>Mg(2+)</name>
        <dbReference type="ChEBI" id="CHEBI:18420"/>
        <label>1</label>
        <note>catalytic</note>
    </ligand>
</feature>
<feature type="binding site" evidence="2 4">
    <location>
        <position position="322"/>
    </location>
    <ligand>
        <name>Mg(2+)</name>
        <dbReference type="ChEBI" id="CHEBI:18420"/>
        <label>2</label>
        <note>catalytic</note>
    </ligand>
</feature>
<feature type="binding site" evidence="4">
    <location>
        <position position="323"/>
    </location>
    <ligand>
        <name>Mg(2+)</name>
        <dbReference type="ChEBI" id="CHEBI:18420"/>
        <label>2</label>
        <note>catalytic</note>
    </ligand>
</feature>
<feature type="binding site" evidence="2">
    <location>
        <begin position="364"/>
        <end position="366"/>
    </location>
    <ligand>
        <name>ATP</name>
        <dbReference type="ChEBI" id="CHEBI:30616"/>
    </ligand>
</feature>
<feature type="binding site" evidence="2 4">
    <location>
        <position position="366"/>
    </location>
    <ligand>
        <name>Mg(2+)</name>
        <dbReference type="ChEBI" id="CHEBI:18420"/>
        <label>1</label>
        <note>catalytic</note>
    </ligand>
</feature>
<feature type="binding site" evidence="2 4">
    <location>
        <position position="366"/>
    </location>
    <ligand>
        <name>Mg(2+)</name>
        <dbReference type="ChEBI" id="CHEBI:18420"/>
        <label>2</label>
        <note>catalytic</note>
    </ligand>
</feature>
<feature type="binding site" evidence="2">
    <location>
        <position position="410"/>
    </location>
    <ligand>
        <name>ATP</name>
        <dbReference type="ChEBI" id="CHEBI:30616"/>
    </ligand>
</feature>
<feature type="binding site" evidence="1">
    <location>
        <position position="1162"/>
    </location>
    <ligand>
        <name>ATP</name>
        <dbReference type="ChEBI" id="CHEBI:30616"/>
    </ligand>
</feature>
<feature type="binding site" evidence="1">
    <location>
        <begin position="1242"/>
        <end position="1244"/>
    </location>
    <ligand>
        <name>ATP</name>
        <dbReference type="ChEBI" id="CHEBI:30616"/>
    </ligand>
</feature>
<feature type="binding site" evidence="1">
    <location>
        <begin position="1249"/>
        <end position="1253"/>
    </location>
    <ligand>
        <name>ATP</name>
        <dbReference type="ChEBI" id="CHEBI:30616"/>
    </ligand>
</feature>
<feature type="binding site" evidence="1">
    <location>
        <position position="1289"/>
    </location>
    <ligand>
        <name>ATP</name>
        <dbReference type="ChEBI" id="CHEBI:30616"/>
    </ligand>
</feature>
<feature type="glycosylation site" description="N-linked (GlcNAc...) asparagine" evidence="3">
    <location>
        <position position="934"/>
    </location>
</feature>
<feature type="glycosylation site" description="N-linked (GlcNAc...) asparagine" evidence="3">
    <location>
        <position position="941"/>
    </location>
</feature>
<feature type="glycosylation site" description="N-linked (GlcNAc...) asparagine" evidence="3">
    <location>
        <position position="948"/>
    </location>
</feature>
<feature type="glycosylation site" description="N-linked (GlcNAc...) asparagine" evidence="3">
    <location>
        <position position="1019"/>
    </location>
</feature>
<feature type="sequence conflict" description="In Ref. 1; AAC62509." evidence="8" ref="1">
    <original>V</original>
    <variation>G</variation>
    <location>
        <position position="538"/>
    </location>
</feature>
<feature type="sequence conflict" description="In Ref. 1; AAC62509." evidence="8" ref="1">
    <original>A</original>
    <variation>VSS</variation>
    <location>
        <position position="679"/>
    </location>
</feature>
<feature type="sequence conflict" description="In Ref. 1; AAC62509." evidence="8" ref="1">
    <original>I</original>
    <variation>T</variation>
    <location>
        <position position="1037"/>
    </location>
</feature>
<feature type="sequence conflict" description="In Ref. 4; AAM50201." evidence="8" ref="4">
    <original>T</original>
    <variation>TSRSFA</variation>
    <location>
        <position position="1183"/>
    </location>
</feature>
<accession>Q9VW60</accession>
<accession>O77247</accession>
<accession>Q8MRK9</accession>